<dbReference type="EC" id="2.2.1.2" evidence="1"/>
<dbReference type="EMBL" id="CP000260">
    <property type="protein sequence ID" value="ABF34559.1"/>
    <property type="molecule type" value="Genomic_DNA"/>
</dbReference>
<dbReference type="SMR" id="Q1JFK0"/>
<dbReference type="KEGG" id="sph:MGAS10270_Spy1494"/>
<dbReference type="HOGENOM" id="CLU_079764_0_0_9"/>
<dbReference type="UniPathway" id="UPA00115">
    <property type="reaction ID" value="UER00414"/>
</dbReference>
<dbReference type="Proteomes" id="UP000002436">
    <property type="component" value="Chromosome"/>
</dbReference>
<dbReference type="GO" id="GO:0005737">
    <property type="term" value="C:cytoplasm"/>
    <property type="evidence" value="ECO:0007669"/>
    <property type="project" value="UniProtKB-SubCell"/>
</dbReference>
<dbReference type="GO" id="GO:0016832">
    <property type="term" value="F:aldehyde-lyase activity"/>
    <property type="evidence" value="ECO:0007669"/>
    <property type="project" value="InterPro"/>
</dbReference>
<dbReference type="GO" id="GO:0004801">
    <property type="term" value="F:transaldolase activity"/>
    <property type="evidence" value="ECO:0007669"/>
    <property type="project" value="UniProtKB-UniRule"/>
</dbReference>
<dbReference type="GO" id="GO:0005975">
    <property type="term" value="P:carbohydrate metabolic process"/>
    <property type="evidence" value="ECO:0007669"/>
    <property type="project" value="InterPro"/>
</dbReference>
<dbReference type="GO" id="GO:0006098">
    <property type="term" value="P:pentose-phosphate shunt"/>
    <property type="evidence" value="ECO:0007669"/>
    <property type="project" value="UniProtKB-UniRule"/>
</dbReference>
<dbReference type="CDD" id="cd00956">
    <property type="entry name" value="Transaldolase_FSA"/>
    <property type="match status" value="1"/>
</dbReference>
<dbReference type="FunFam" id="3.20.20.70:FF:000018">
    <property type="entry name" value="Probable transaldolase"/>
    <property type="match status" value="1"/>
</dbReference>
<dbReference type="Gene3D" id="3.20.20.70">
    <property type="entry name" value="Aldolase class I"/>
    <property type="match status" value="1"/>
</dbReference>
<dbReference type="HAMAP" id="MF_00494">
    <property type="entry name" value="Transaldolase_3b"/>
    <property type="match status" value="1"/>
</dbReference>
<dbReference type="InterPro" id="IPR013785">
    <property type="entry name" value="Aldolase_TIM"/>
</dbReference>
<dbReference type="InterPro" id="IPR001585">
    <property type="entry name" value="TAL/FSA"/>
</dbReference>
<dbReference type="InterPro" id="IPR022999">
    <property type="entry name" value="Transaldolase_3B"/>
</dbReference>
<dbReference type="InterPro" id="IPR004731">
    <property type="entry name" value="Transaldolase_3B/F6P_aldolase"/>
</dbReference>
<dbReference type="InterPro" id="IPR018225">
    <property type="entry name" value="Transaldolase_AS"/>
</dbReference>
<dbReference type="InterPro" id="IPR033919">
    <property type="entry name" value="TSA/FSA_arc/bac"/>
</dbReference>
<dbReference type="NCBIfam" id="TIGR00875">
    <property type="entry name" value="fsa_talC_mipB"/>
    <property type="match status" value="1"/>
</dbReference>
<dbReference type="PANTHER" id="PTHR10683">
    <property type="entry name" value="TRANSALDOLASE"/>
    <property type="match status" value="1"/>
</dbReference>
<dbReference type="PANTHER" id="PTHR10683:SF36">
    <property type="entry name" value="TRANSALDOLASE"/>
    <property type="match status" value="1"/>
</dbReference>
<dbReference type="Pfam" id="PF00923">
    <property type="entry name" value="TAL_FSA"/>
    <property type="match status" value="1"/>
</dbReference>
<dbReference type="SUPFAM" id="SSF51569">
    <property type="entry name" value="Aldolase"/>
    <property type="match status" value="1"/>
</dbReference>
<dbReference type="PROSITE" id="PS01054">
    <property type="entry name" value="TRANSALDOLASE_1"/>
    <property type="match status" value="1"/>
</dbReference>
<dbReference type="PROSITE" id="PS00958">
    <property type="entry name" value="TRANSALDOLASE_2"/>
    <property type="match status" value="1"/>
</dbReference>
<keyword id="KW-0963">Cytoplasm</keyword>
<keyword id="KW-0570">Pentose shunt</keyword>
<keyword id="KW-0704">Schiff base</keyword>
<keyword id="KW-0808">Transferase</keyword>
<sequence>MKFFLDTANVAAIKAINELGVVDGVTTNPTIISREGRDFETVIKEICDIVDGPISAEVTGLTADAMVEEARSIAKWHDNVVVKIPMTTEGLKATNILSKEGIKTNVTLIFTVSQGLMAMKAGATYISPFIGRLEDIGTDAYQLISDLREIIDLYDFQTEIIAASIRTTAHVEAVAKLGAHIATIPDPLFAKMTQHPLTTNGLKTFMEDWASFKK</sequence>
<reference key="1">
    <citation type="journal article" date="2006" name="Proc. Natl. Acad. Sci. U.S.A.">
        <title>Molecular genetic anatomy of inter- and intraserotype variation in the human bacterial pathogen group A Streptococcus.</title>
        <authorList>
            <person name="Beres S.B."/>
            <person name="Richter E.W."/>
            <person name="Nagiec M.J."/>
            <person name="Sumby P."/>
            <person name="Porcella S.F."/>
            <person name="DeLeo F.R."/>
            <person name="Musser J.M."/>
        </authorList>
    </citation>
    <scope>NUCLEOTIDE SEQUENCE [LARGE SCALE GENOMIC DNA]</scope>
    <source>
        <strain>MGAS10270</strain>
    </source>
</reference>
<feature type="chain" id="PRO_1000060479" description="Probable transaldolase">
    <location>
        <begin position="1"/>
        <end position="214"/>
    </location>
</feature>
<feature type="active site" description="Schiff-base intermediate with substrate" evidence="1">
    <location>
        <position position="83"/>
    </location>
</feature>
<comment type="function">
    <text evidence="1">Transaldolase is important for the balance of metabolites in the pentose-phosphate pathway.</text>
</comment>
<comment type="catalytic activity">
    <reaction evidence="1">
        <text>D-sedoheptulose 7-phosphate + D-glyceraldehyde 3-phosphate = D-erythrose 4-phosphate + beta-D-fructose 6-phosphate</text>
        <dbReference type="Rhea" id="RHEA:17053"/>
        <dbReference type="ChEBI" id="CHEBI:16897"/>
        <dbReference type="ChEBI" id="CHEBI:57483"/>
        <dbReference type="ChEBI" id="CHEBI:57634"/>
        <dbReference type="ChEBI" id="CHEBI:59776"/>
        <dbReference type="EC" id="2.2.1.2"/>
    </reaction>
</comment>
<comment type="pathway">
    <text evidence="1">Carbohydrate degradation; pentose phosphate pathway; D-glyceraldehyde 3-phosphate and beta-D-fructose 6-phosphate from D-ribose 5-phosphate and D-xylulose 5-phosphate (non-oxidative stage): step 2/3.</text>
</comment>
<comment type="subcellular location">
    <subcellularLocation>
        <location evidence="1">Cytoplasm</location>
    </subcellularLocation>
</comment>
<comment type="similarity">
    <text evidence="1">Belongs to the transaldolase family. Type 3B subfamily.</text>
</comment>
<organism>
    <name type="scientific">Streptococcus pyogenes serotype M2 (strain MGAS10270)</name>
    <dbReference type="NCBI Taxonomy" id="370552"/>
    <lineage>
        <taxon>Bacteria</taxon>
        <taxon>Bacillati</taxon>
        <taxon>Bacillota</taxon>
        <taxon>Bacilli</taxon>
        <taxon>Lactobacillales</taxon>
        <taxon>Streptococcaceae</taxon>
        <taxon>Streptococcus</taxon>
    </lineage>
</organism>
<evidence type="ECO:0000255" key="1">
    <source>
        <dbReference type="HAMAP-Rule" id="MF_00494"/>
    </source>
</evidence>
<gene>
    <name evidence="1" type="primary">tal</name>
    <name type="ordered locus">MGAS10270_Spy1494</name>
</gene>
<accession>Q1JFK0</accession>
<name>TAL_STRPD</name>
<proteinExistence type="inferred from homology"/>
<protein>
    <recommendedName>
        <fullName evidence="1">Probable transaldolase</fullName>
        <ecNumber evidence="1">2.2.1.2</ecNumber>
    </recommendedName>
</protein>